<evidence type="ECO:0000255" key="1">
    <source>
        <dbReference type="HAMAP-Rule" id="MF_00921"/>
    </source>
</evidence>
<proteinExistence type="inferred from homology"/>
<feature type="chain" id="PRO_1000149704" description="Putative pyruvate, phosphate dikinase regulatory protein">
    <location>
        <begin position="1"/>
        <end position="269"/>
    </location>
</feature>
<feature type="binding site" evidence="1">
    <location>
        <begin position="147"/>
        <end position="154"/>
    </location>
    <ligand>
        <name>ADP</name>
        <dbReference type="ChEBI" id="CHEBI:456216"/>
    </ligand>
</feature>
<keyword id="KW-0418">Kinase</keyword>
<keyword id="KW-0547">Nucleotide-binding</keyword>
<keyword id="KW-0723">Serine/threonine-protein kinase</keyword>
<keyword id="KW-0808">Transferase</keyword>
<sequence length="269" mass="30557">MFKIYAVSDSIGETAEQVANATAYQFGSSVKVERVPYVKTFEDVNNLISIIKNPNEAMIISTIVLVDIREFLVQRCVESGIHISNVLGPCISLVSTILNKTPEYKPGAVWDMDKKYYKKIEAMEFAIRYDDSKDHSGIKHADIVLIGLSRTSKTPLSIYLANKGIKALNIPLMPEVPVPEELFEIDRKKIIGLTIDPMHLIEIRRHRVDNMMKIPTELKYANAERVLDELEFADKIMRKLKCKVIDVTKRAIEDTALIIMESVFSDRII</sequence>
<gene>
    <name type="ordered locus">CLM_4116</name>
</gene>
<accession>C1FNL3</accession>
<comment type="function">
    <text evidence="1">Bifunctional serine/threonine kinase and phosphorylase involved in the regulation of the pyruvate, phosphate dikinase (PPDK) by catalyzing its phosphorylation/dephosphorylation.</text>
</comment>
<comment type="catalytic activity">
    <reaction evidence="1">
        <text>N(tele)-phospho-L-histidyl/L-threonyl-[pyruvate, phosphate dikinase] + ADP = N(tele)-phospho-L-histidyl/O-phospho-L-threonyl-[pyruvate, phosphate dikinase] + AMP + H(+)</text>
        <dbReference type="Rhea" id="RHEA:43692"/>
        <dbReference type="Rhea" id="RHEA-COMP:10650"/>
        <dbReference type="Rhea" id="RHEA-COMP:10651"/>
        <dbReference type="ChEBI" id="CHEBI:15378"/>
        <dbReference type="ChEBI" id="CHEBI:30013"/>
        <dbReference type="ChEBI" id="CHEBI:61977"/>
        <dbReference type="ChEBI" id="CHEBI:83586"/>
        <dbReference type="ChEBI" id="CHEBI:456215"/>
        <dbReference type="ChEBI" id="CHEBI:456216"/>
        <dbReference type="EC" id="2.7.11.32"/>
    </reaction>
</comment>
<comment type="catalytic activity">
    <reaction evidence="1">
        <text>N(tele)-phospho-L-histidyl/O-phospho-L-threonyl-[pyruvate, phosphate dikinase] + phosphate + H(+) = N(tele)-phospho-L-histidyl/L-threonyl-[pyruvate, phosphate dikinase] + diphosphate</text>
        <dbReference type="Rhea" id="RHEA:43696"/>
        <dbReference type="Rhea" id="RHEA-COMP:10650"/>
        <dbReference type="Rhea" id="RHEA-COMP:10651"/>
        <dbReference type="ChEBI" id="CHEBI:15378"/>
        <dbReference type="ChEBI" id="CHEBI:30013"/>
        <dbReference type="ChEBI" id="CHEBI:33019"/>
        <dbReference type="ChEBI" id="CHEBI:43474"/>
        <dbReference type="ChEBI" id="CHEBI:61977"/>
        <dbReference type="ChEBI" id="CHEBI:83586"/>
        <dbReference type="EC" id="2.7.4.27"/>
    </reaction>
</comment>
<comment type="similarity">
    <text evidence="1">Belongs to the pyruvate, phosphate/water dikinase regulatory protein family. PDRP subfamily.</text>
</comment>
<dbReference type="EC" id="2.7.11.32" evidence="1"/>
<dbReference type="EC" id="2.7.4.27" evidence="1"/>
<dbReference type="EMBL" id="CP001581">
    <property type="protein sequence ID" value="ACO86904.1"/>
    <property type="molecule type" value="Genomic_DNA"/>
</dbReference>
<dbReference type="RefSeq" id="WP_003359375.1">
    <property type="nucleotide sequence ID" value="NC_012563.1"/>
</dbReference>
<dbReference type="SMR" id="C1FNL3"/>
<dbReference type="KEGG" id="cby:CLM_4116"/>
<dbReference type="eggNOG" id="COG1806">
    <property type="taxonomic scope" value="Bacteria"/>
</dbReference>
<dbReference type="HOGENOM" id="CLU_046206_2_1_9"/>
<dbReference type="Proteomes" id="UP000001374">
    <property type="component" value="Chromosome"/>
</dbReference>
<dbReference type="GO" id="GO:0043531">
    <property type="term" value="F:ADP binding"/>
    <property type="evidence" value="ECO:0007669"/>
    <property type="project" value="UniProtKB-UniRule"/>
</dbReference>
<dbReference type="GO" id="GO:0005524">
    <property type="term" value="F:ATP binding"/>
    <property type="evidence" value="ECO:0007669"/>
    <property type="project" value="InterPro"/>
</dbReference>
<dbReference type="GO" id="GO:0016776">
    <property type="term" value="F:phosphotransferase activity, phosphate group as acceptor"/>
    <property type="evidence" value="ECO:0007669"/>
    <property type="project" value="UniProtKB-UniRule"/>
</dbReference>
<dbReference type="GO" id="GO:0004674">
    <property type="term" value="F:protein serine/threonine kinase activity"/>
    <property type="evidence" value="ECO:0007669"/>
    <property type="project" value="UniProtKB-UniRule"/>
</dbReference>
<dbReference type="HAMAP" id="MF_00921">
    <property type="entry name" value="PDRP"/>
    <property type="match status" value="1"/>
</dbReference>
<dbReference type="InterPro" id="IPR005177">
    <property type="entry name" value="Kinase-pyrophosphorylase"/>
</dbReference>
<dbReference type="InterPro" id="IPR026565">
    <property type="entry name" value="PPDK_reg"/>
</dbReference>
<dbReference type="NCBIfam" id="NF003742">
    <property type="entry name" value="PRK05339.1"/>
    <property type="match status" value="1"/>
</dbReference>
<dbReference type="PANTHER" id="PTHR31756">
    <property type="entry name" value="PYRUVATE, PHOSPHATE DIKINASE REGULATORY PROTEIN 1, CHLOROPLASTIC"/>
    <property type="match status" value="1"/>
</dbReference>
<dbReference type="PANTHER" id="PTHR31756:SF3">
    <property type="entry name" value="PYRUVATE, PHOSPHATE DIKINASE REGULATORY PROTEIN 1, CHLOROPLASTIC"/>
    <property type="match status" value="1"/>
</dbReference>
<dbReference type="Pfam" id="PF03618">
    <property type="entry name" value="Kinase-PPPase"/>
    <property type="match status" value="1"/>
</dbReference>
<protein>
    <recommendedName>
        <fullName evidence="1">Putative pyruvate, phosphate dikinase regulatory protein</fullName>
        <shortName evidence="1">PPDK regulatory protein</shortName>
        <ecNumber evidence="1">2.7.11.32</ecNumber>
        <ecNumber evidence="1">2.7.4.27</ecNumber>
    </recommendedName>
</protein>
<organism>
    <name type="scientific">Clostridium botulinum (strain Kyoto / Type A2)</name>
    <dbReference type="NCBI Taxonomy" id="536232"/>
    <lineage>
        <taxon>Bacteria</taxon>
        <taxon>Bacillati</taxon>
        <taxon>Bacillota</taxon>
        <taxon>Clostridia</taxon>
        <taxon>Eubacteriales</taxon>
        <taxon>Clostridiaceae</taxon>
        <taxon>Clostridium</taxon>
    </lineage>
</organism>
<name>PDRP_CLOBJ</name>
<reference key="1">
    <citation type="submission" date="2008-10" db="EMBL/GenBank/DDBJ databases">
        <title>Genome sequence of Clostridium botulinum A2 Kyoto.</title>
        <authorList>
            <person name="Shrivastava S."/>
            <person name="Brinkac L.M."/>
            <person name="Brown J.L."/>
            <person name="Bruce D."/>
            <person name="Detter C.C."/>
            <person name="Johnson E.A."/>
            <person name="Munk C.A."/>
            <person name="Smith L.A."/>
            <person name="Smith T.J."/>
            <person name="Sutton G."/>
            <person name="Brettin T.S."/>
        </authorList>
    </citation>
    <scope>NUCLEOTIDE SEQUENCE [LARGE SCALE GENOMIC DNA]</scope>
    <source>
        <strain>Kyoto / Type A2</strain>
    </source>
</reference>